<organism>
    <name type="scientific">Mycobacterium sp. (strain JLS)</name>
    <dbReference type="NCBI Taxonomy" id="164757"/>
    <lineage>
        <taxon>Bacteria</taxon>
        <taxon>Bacillati</taxon>
        <taxon>Actinomycetota</taxon>
        <taxon>Actinomycetes</taxon>
        <taxon>Mycobacteriales</taxon>
        <taxon>Mycobacteriaceae</taxon>
        <taxon>Mycobacterium</taxon>
    </lineage>
</organism>
<name>NRDI_MYCSJ</name>
<evidence type="ECO:0000255" key="1">
    <source>
        <dbReference type="HAMAP-Rule" id="MF_00128"/>
    </source>
</evidence>
<protein>
    <recommendedName>
        <fullName evidence="1">Protein NrdI</fullName>
    </recommendedName>
</protein>
<accession>A3PXF8</accession>
<feature type="chain" id="PRO_1000016511" description="Protein NrdI">
    <location>
        <begin position="1"/>
        <end position="152"/>
    </location>
</feature>
<proteinExistence type="inferred from homology"/>
<dbReference type="EMBL" id="CP000580">
    <property type="protein sequence ID" value="ABN97585.1"/>
    <property type="molecule type" value="Genomic_DNA"/>
</dbReference>
<dbReference type="SMR" id="A3PXF8"/>
<dbReference type="KEGG" id="mjl:Mjls_1797"/>
<dbReference type="HOGENOM" id="CLU_114845_0_0_11"/>
<dbReference type="BioCyc" id="MSP164757:G1G8C-1813-MONOMER"/>
<dbReference type="GO" id="GO:0010181">
    <property type="term" value="F:FMN binding"/>
    <property type="evidence" value="ECO:0007669"/>
    <property type="project" value="InterPro"/>
</dbReference>
<dbReference type="GO" id="GO:0036211">
    <property type="term" value="P:protein modification process"/>
    <property type="evidence" value="ECO:0007669"/>
    <property type="project" value="InterPro"/>
</dbReference>
<dbReference type="Gene3D" id="3.40.50.360">
    <property type="match status" value="1"/>
</dbReference>
<dbReference type="HAMAP" id="MF_00128">
    <property type="entry name" value="NrdI"/>
    <property type="match status" value="1"/>
</dbReference>
<dbReference type="InterPro" id="IPR029039">
    <property type="entry name" value="Flavoprotein-like_sf"/>
</dbReference>
<dbReference type="InterPro" id="IPR020852">
    <property type="entry name" value="RNR_Ib_NrdI_bac"/>
</dbReference>
<dbReference type="InterPro" id="IPR004465">
    <property type="entry name" value="RNR_NrdI"/>
</dbReference>
<dbReference type="NCBIfam" id="TIGR00333">
    <property type="entry name" value="nrdI"/>
    <property type="match status" value="1"/>
</dbReference>
<dbReference type="PANTHER" id="PTHR37297">
    <property type="entry name" value="PROTEIN NRDI"/>
    <property type="match status" value="1"/>
</dbReference>
<dbReference type="PANTHER" id="PTHR37297:SF1">
    <property type="entry name" value="PROTEIN NRDI"/>
    <property type="match status" value="1"/>
</dbReference>
<dbReference type="Pfam" id="PF07972">
    <property type="entry name" value="Flavodoxin_NdrI"/>
    <property type="match status" value="1"/>
</dbReference>
<dbReference type="PIRSF" id="PIRSF005087">
    <property type="entry name" value="NrdI"/>
    <property type="match status" value="1"/>
</dbReference>
<dbReference type="SUPFAM" id="SSF52218">
    <property type="entry name" value="Flavoproteins"/>
    <property type="match status" value="1"/>
</dbReference>
<gene>
    <name evidence="1" type="primary">nrdI</name>
    <name type="ordered locus">Mjls_1797</name>
</gene>
<reference key="1">
    <citation type="submission" date="2007-02" db="EMBL/GenBank/DDBJ databases">
        <title>Complete sequence of Mycobacterium sp. JLS.</title>
        <authorList>
            <consortium name="US DOE Joint Genome Institute"/>
            <person name="Copeland A."/>
            <person name="Lucas S."/>
            <person name="Lapidus A."/>
            <person name="Barry K."/>
            <person name="Detter J.C."/>
            <person name="Glavina del Rio T."/>
            <person name="Hammon N."/>
            <person name="Israni S."/>
            <person name="Dalin E."/>
            <person name="Tice H."/>
            <person name="Pitluck S."/>
            <person name="Chain P."/>
            <person name="Malfatti S."/>
            <person name="Shin M."/>
            <person name="Vergez L."/>
            <person name="Schmutz J."/>
            <person name="Larimer F."/>
            <person name="Land M."/>
            <person name="Hauser L."/>
            <person name="Kyrpides N."/>
            <person name="Mikhailova N."/>
            <person name="Miller C.D."/>
            <person name="Anderson A.J."/>
            <person name="Sims R.C."/>
            <person name="Richardson P."/>
        </authorList>
    </citation>
    <scope>NUCLEOTIDE SEQUENCE [LARGE SCALE GENOMIC DNA]</scope>
    <source>
        <strain>JLS</strain>
    </source>
</reference>
<comment type="function">
    <text evidence="1">Probably involved in ribonucleotide reductase function.</text>
</comment>
<comment type="similarity">
    <text evidence="1">Belongs to the NrdI family.</text>
</comment>
<sequence length="152" mass="16755">MGNIVYFSSVSENTHRFVEKLELPATRIPILGRIQDPDFVREPYVLVLPTYGGGHANGPDPDAGGYVPKQVIAFLNNEHNRSLIRGVIAAGNTNFGAEFGYAGDVVSRKCGVPYLYRFELMGTTDDVLAVRAGLENFWKEQTCHPPSQLQSL</sequence>